<dbReference type="EC" id="3.6.-.-" evidence="1"/>
<dbReference type="EMBL" id="CP000911">
    <property type="protein sequence ID" value="ABY38914.1"/>
    <property type="molecule type" value="Genomic_DNA"/>
</dbReference>
<dbReference type="RefSeq" id="WP_006071760.1">
    <property type="nucleotide sequence ID" value="NC_010169.1"/>
</dbReference>
<dbReference type="SMR" id="B0CJG2"/>
<dbReference type="KEGG" id="bmt:BSUIS_A1903"/>
<dbReference type="HOGENOM" id="CLU_019624_3_1_5"/>
<dbReference type="Proteomes" id="UP000008545">
    <property type="component" value="Chromosome I"/>
</dbReference>
<dbReference type="GO" id="GO:0005737">
    <property type="term" value="C:cytoplasm"/>
    <property type="evidence" value="ECO:0007669"/>
    <property type="project" value="UniProtKB-SubCell"/>
</dbReference>
<dbReference type="GO" id="GO:0005525">
    <property type="term" value="F:GTP binding"/>
    <property type="evidence" value="ECO:0007669"/>
    <property type="project" value="UniProtKB-UniRule"/>
</dbReference>
<dbReference type="GO" id="GO:0003924">
    <property type="term" value="F:GTPase activity"/>
    <property type="evidence" value="ECO:0007669"/>
    <property type="project" value="UniProtKB-UniRule"/>
</dbReference>
<dbReference type="GO" id="GO:0046872">
    <property type="term" value="F:metal ion binding"/>
    <property type="evidence" value="ECO:0007669"/>
    <property type="project" value="UniProtKB-KW"/>
</dbReference>
<dbReference type="GO" id="GO:0030488">
    <property type="term" value="P:tRNA methylation"/>
    <property type="evidence" value="ECO:0007669"/>
    <property type="project" value="TreeGrafter"/>
</dbReference>
<dbReference type="GO" id="GO:0002098">
    <property type="term" value="P:tRNA wobble uridine modification"/>
    <property type="evidence" value="ECO:0007669"/>
    <property type="project" value="TreeGrafter"/>
</dbReference>
<dbReference type="CDD" id="cd04164">
    <property type="entry name" value="trmE"/>
    <property type="match status" value="1"/>
</dbReference>
<dbReference type="CDD" id="cd14858">
    <property type="entry name" value="TrmE_N"/>
    <property type="match status" value="1"/>
</dbReference>
<dbReference type="FunFam" id="3.30.1360.120:FF:000007">
    <property type="entry name" value="tRNA modification GTPase GTPBP3, mitochondrial"/>
    <property type="match status" value="1"/>
</dbReference>
<dbReference type="Gene3D" id="3.40.50.300">
    <property type="entry name" value="P-loop containing nucleotide triphosphate hydrolases"/>
    <property type="match status" value="1"/>
</dbReference>
<dbReference type="Gene3D" id="3.30.1360.120">
    <property type="entry name" value="Probable tRNA modification gtpase trme, domain 1"/>
    <property type="match status" value="1"/>
</dbReference>
<dbReference type="Gene3D" id="1.20.120.430">
    <property type="entry name" value="tRNA modification GTPase MnmE domain 2"/>
    <property type="match status" value="1"/>
</dbReference>
<dbReference type="HAMAP" id="MF_00379">
    <property type="entry name" value="GTPase_MnmE"/>
    <property type="match status" value="1"/>
</dbReference>
<dbReference type="InterPro" id="IPR031168">
    <property type="entry name" value="G_TrmE"/>
</dbReference>
<dbReference type="InterPro" id="IPR006073">
    <property type="entry name" value="GTP-bd"/>
</dbReference>
<dbReference type="InterPro" id="IPR018948">
    <property type="entry name" value="GTP-bd_TrmE_N"/>
</dbReference>
<dbReference type="InterPro" id="IPR004520">
    <property type="entry name" value="GTPase_MnmE"/>
</dbReference>
<dbReference type="InterPro" id="IPR027368">
    <property type="entry name" value="MnmE_dom2"/>
</dbReference>
<dbReference type="InterPro" id="IPR025867">
    <property type="entry name" value="MnmE_helical"/>
</dbReference>
<dbReference type="InterPro" id="IPR027417">
    <property type="entry name" value="P-loop_NTPase"/>
</dbReference>
<dbReference type="InterPro" id="IPR005225">
    <property type="entry name" value="Small_GTP-bd"/>
</dbReference>
<dbReference type="InterPro" id="IPR027266">
    <property type="entry name" value="TrmE/GcvT_dom1"/>
</dbReference>
<dbReference type="NCBIfam" id="TIGR00450">
    <property type="entry name" value="mnmE_trmE_thdF"/>
    <property type="match status" value="1"/>
</dbReference>
<dbReference type="NCBIfam" id="NF003661">
    <property type="entry name" value="PRK05291.1-3"/>
    <property type="match status" value="1"/>
</dbReference>
<dbReference type="NCBIfam" id="TIGR00231">
    <property type="entry name" value="small_GTP"/>
    <property type="match status" value="1"/>
</dbReference>
<dbReference type="PANTHER" id="PTHR42714">
    <property type="entry name" value="TRNA MODIFICATION GTPASE GTPBP3"/>
    <property type="match status" value="1"/>
</dbReference>
<dbReference type="PANTHER" id="PTHR42714:SF2">
    <property type="entry name" value="TRNA MODIFICATION GTPASE GTPBP3, MITOCHONDRIAL"/>
    <property type="match status" value="1"/>
</dbReference>
<dbReference type="Pfam" id="PF01926">
    <property type="entry name" value="MMR_HSR1"/>
    <property type="match status" value="1"/>
</dbReference>
<dbReference type="Pfam" id="PF12631">
    <property type="entry name" value="MnmE_helical"/>
    <property type="match status" value="1"/>
</dbReference>
<dbReference type="Pfam" id="PF10396">
    <property type="entry name" value="TrmE_N"/>
    <property type="match status" value="1"/>
</dbReference>
<dbReference type="SUPFAM" id="SSF52540">
    <property type="entry name" value="P-loop containing nucleoside triphosphate hydrolases"/>
    <property type="match status" value="1"/>
</dbReference>
<dbReference type="SUPFAM" id="SSF116878">
    <property type="entry name" value="TrmE connector domain"/>
    <property type="match status" value="1"/>
</dbReference>
<dbReference type="PROSITE" id="PS51709">
    <property type="entry name" value="G_TRME"/>
    <property type="match status" value="1"/>
</dbReference>
<evidence type="ECO:0000255" key="1">
    <source>
        <dbReference type="HAMAP-Rule" id="MF_00379"/>
    </source>
</evidence>
<protein>
    <recommendedName>
        <fullName evidence="1">tRNA modification GTPase MnmE</fullName>
        <ecNumber evidence="1">3.6.-.-</ecNumber>
    </recommendedName>
</protein>
<gene>
    <name evidence="1" type="primary">mnmE</name>
    <name evidence="1" type="synonym">trmE</name>
    <name type="ordered locus">BSUIS_A1903</name>
</gene>
<keyword id="KW-0963">Cytoplasm</keyword>
<keyword id="KW-0342">GTP-binding</keyword>
<keyword id="KW-0378">Hydrolase</keyword>
<keyword id="KW-0460">Magnesium</keyword>
<keyword id="KW-0479">Metal-binding</keyword>
<keyword id="KW-0547">Nucleotide-binding</keyword>
<keyword id="KW-0630">Potassium</keyword>
<keyword id="KW-0819">tRNA processing</keyword>
<proteinExistence type="inferred from homology"/>
<organism>
    <name type="scientific">Brucella suis (strain ATCC 23445 / NCTC 10510)</name>
    <dbReference type="NCBI Taxonomy" id="470137"/>
    <lineage>
        <taxon>Bacteria</taxon>
        <taxon>Pseudomonadati</taxon>
        <taxon>Pseudomonadota</taxon>
        <taxon>Alphaproteobacteria</taxon>
        <taxon>Hyphomicrobiales</taxon>
        <taxon>Brucellaceae</taxon>
        <taxon>Brucella/Ochrobactrum group</taxon>
        <taxon>Brucella</taxon>
    </lineage>
</organism>
<accession>B0CJG2</accession>
<feature type="chain" id="PRO_0000345733" description="tRNA modification GTPase MnmE">
    <location>
        <begin position="1"/>
        <end position="442"/>
    </location>
</feature>
<feature type="domain" description="TrmE-type G">
    <location>
        <begin position="221"/>
        <end position="366"/>
    </location>
</feature>
<feature type="binding site" evidence="1">
    <location>
        <position position="27"/>
    </location>
    <ligand>
        <name>(6S)-5-formyl-5,6,7,8-tetrahydrofolate</name>
        <dbReference type="ChEBI" id="CHEBI:57457"/>
    </ligand>
</feature>
<feature type="binding site" evidence="1">
    <location>
        <position position="84"/>
    </location>
    <ligand>
        <name>(6S)-5-formyl-5,6,7,8-tetrahydrofolate</name>
        <dbReference type="ChEBI" id="CHEBI:57457"/>
    </ligand>
</feature>
<feature type="binding site" evidence="1">
    <location>
        <position position="124"/>
    </location>
    <ligand>
        <name>(6S)-5-formyl-5,6,7,8-tetrahydrofolate</name>
        <dbReference type="ChEBI" id="CHEBI:57457"/>
    </ligand>
</feature>
<feature type="binding site" evidence="1">
    <location>
        <begin position="231"/>
        <end position="236"/>
    </location>
    <ligand>
        <name>GTP</name>
        <dbReference type="ChEBI" id="CHEBI:37565"/>
    </ligand>
</feature>
<feature type="binding site" evidence="1">
    <location>
        <position position="235"/>
    </location>
    <ligand>
        <name>Mg(2+)</name>
        <dbReference type="ChEBI" id="CHEBI:18420"/>
    </ligand>
</feature>
<feature type="binding site" evidence="1">
    <location>
        <begin position="250"/>
        <end position="256"/>
    </location>
    <ligand>
        <name>GTP</name>
        <dbReference type="ChEBI" id="CHEBI:37565"/>
    </ligand>
</feature>
<feature type="binding site" evidence="1">
    <location>
        <position position="256"/>
    </location>
    <ligand>
        <name>Mg(2+)</name>
        <dbReference type="ChEBI" id="CHEBI:18420"/>
    </ligand>
</feature>
<feature type="binding site" evidence="1">
    <location>
        <begin position="275"/>
        <end position="278"/>
    </location>
    <ligand>
        <name>GTP</name>
        <dbReference type="ChEBI" id="CHEBI:37565"/>
    </ligand>
</feature>
<feature type="binding site" evidence="1">
    <location>
        <position position="442"/>
    </location>
    <ligand>
        <name>(6S)-5-formyl-5,6,7,8-tetrahydrofolate</name>
        <dbReference type="ChEBI" id="CHEBI:57457"/>
    </ligand>
</feature>
<comment type="function">
    <text evidence="1">Exhibits a very high intrinsic GTPase hydrolysis rate. Involved in the addition of a carboxymethylaminomethyl (cmnm) group at the wobble position (U34) of certain tRNAs, forming tRNA-cmnm(5)s(2)U34.</text>
</comment>
<comment type="cofactor">
    <cofactor evidence="1">
        <name>K(+)</name>
        <dbReference type="ChEBI" id="CHEBI:29103"/>
    </cofactor>
    <text evidence="1">Binds 1 potassium ion per subunit.</text>
</comment>
<comment type="subunit">
    <text evidence="1">Homodimer. Heterotetramer of two MnmE and two MnmG subunits.</text>
</comment>
<comment type="subcellular location">
    <subcellularLocation>
        <location evidence="1">Cytoplasm</location>
    </subcellularLocation>
</comment>
<comment type="similarity">
    <text evidence="1">Belongs to the TRAFAC class TrmE-Era-EngA-EngB-Septin-like GTPase superfamily. TrmE GTPase family.</text>
</comment>
<sequence length="442" mass="48139">MSEIGSYHDTIFALSSGRLPSGVAVIRISGPKTRFVYETICQAIPEPRHAALLTFRSRNGDAIDRGLTLFFPAPHTFTGEDCAEFHLHGGKAVVEKMLAVLGELPGCRIAEAGEFTRRAFANGKMDLTIAEGLADLIAAETEGQRRLAMQVASGNQRKLYSEWRQRLINARAFIEAELDFADESDVPGSVSMQVWQQLSALKHEIEYHIASGKRAAMLRDGLHVVIVGAPNAGKSSLLNFLAGRDVAIISEEAGTTRDLLEVKLDLGGIPVYVTDTAGLRETDSLVEKIGIERARARMAEADLVLSLEDMSGPVSVTVEKIEAETWLIGTKADLGGSASGLWKYHISTMTGSGLEQLLDALQAFAEAKIGQIEDAVPTRQRHINLLRATIEEIEKAIEGDDLPLELRAENMRLASQFLGRITGDVDVEEILDVIFSQFCIGK</sequence>
<reference key="1">
    <citation type="submission" date="2007-12" db="EMBL/GenBank/DDBJ databases">
        <title>Brucella suis ATCC 23445 whole genome shotgun sequencing project.</title>
        <authorList>
            <person name="Setubal J.C."/>
            <person name="Bowns C."/>
            <person name="Boyle S."/>
            <person name="Crasta O.R."/>
            <person name="Czar M.J."/>
            <person name="Dharmanolla C."/>
            <person name="Gillespie J.J."/>
            <person name="Kenyon R.W."/>
            <person name="Lu J."/>
            <person name="Mane S."/>
            <person name="Mohapatra S."/>
            <person name="Nagrani S."/>
            <person name="Purkayastha A."/>
            <person name="Rajasimha H.K."/>
            <person name="Shallom J.M."/>
            <person name="Shallom S."/>
            <person name="Shukla M."/>
            <person name="Snyder E.E."/>
            <person name="Sobral B.W."/>
            <person name="Wattam A.R."/>
            <person name="Will R."/>
            <person name="Williams K."/>
            <person name="Yoo H."/>
            <person name="Bruce D."/>
            <person name="Detter C."/>
            <person name="Munk C."/>
            <person name="Brettin T.S."/>
        </authorList>
    </citation>
    <scope>NUCLEOTIDE SEQUENCE [LARGE SCALE GENOMIC DNA]</scope>
    <source>
        <strain>ATCC 23445 / NCTC 10510</strain>
    </source>
</reference>
<name>MNME_BRUSI</name>